<gene>
    <name evidence="2" type="primary">esxB</name>
    <name type="ordered locus">MW0265</name>
</gene>
<dbReference type="EMBL" id="BA000033">
    <property type="protein sequence ID" value="BAB94130.1"/>
    <property type="molecule type" value="Genomic_DNA"/>
</dbReference>
<dbReference type="RefSeq" id="WP_000509667.1">
    <property type="nucleotide sequence ID" value="NC_003923.1"/>
</dbReference>
<dbReference type="SMR" id="Q8NYF1"/>
<dbReference type="KEGG" id="sam:MW0265"/>
<dbReference type="HOGENOM" id="CLU_2248426_0_0_9"/>
<dbReference type="GO" id="GO:0005576">
    <property type="term" value="C:extracellular region"/>
    <property type="evidence" value="ECO:0007669"/>
    <property type="project" value="UniProtKB-SubCell"/>
</dbReference>
<dbReference type="InterPro" id="IPR036689">
    <property type="entry name" value="ESAT-6-like_sf"/>
</dbReference>
<dbReference type="InterPro" id="IPR010310">
    <property type="entry name" value="T7SS_ESAT-6-like"/>
</dbReference>
<dbReference type="Pfam" id="PF06013">
    <property type="entry name" value="WXG100"/>
    <property type="match status" value="1"/>
</dbReference>
<dbReference type="SUPFAM" id="SSF140453">
    <property type="entry name" value="EsxAB dimer-like"/>
    <property type="match status" value="1"/>
</dbReference>
<keyword id="KW-0964">Secreted</keyword>
<keyword id="KW-0843">Virulence</keyword>
<name>ESXB_STAAW</name>
<proteinExistence type="inferred from homology"/>
<evidence type="ECO:0000250" key="1">
    <source>
        <dbReference type="UniProtKB" id="A0A0H2XIE9"/>
    </source>
</evidence>
<evidence type="ECO:0000250" key="2">
    <source>
        <dbReference type="UniProtKB" id="P0C047"/>
    </source>
</evidence>
<evidence type="ECO:0000250" key="3">
    <source>
        <dbReference type="UniProtKB" id="Q2G182"/>
    </source>
</evidence>
<evidence type="ECO:0000305" key="4"/>
<feature type="chain" id="PRO_0000167835" description="Type VII secretion system extracellular protein B">
    <location>
        <begin position="1"/>
        <end position="104"/>
    </location>
</feature>
<organism>
    <name type="scientific">Staphylococcus aureus (strain MW2)</name>
    <dbReference type="NCBI Taxonomy" id="196620"/>
    <lineage>
        <taxon>Bacteria</taxon>
        <taxon>Bacillati</taxon>
        <taxon>Bacillota</taxon>
        <taxon>Bacilli</taxon>
        <taxon>Bacillales</taxon>
        <taxon>Staphylococcaceae</taxon>
        <taxon>Staphylococcus</taxon>
    </lineage>
</organism>
<comment type="function">
    <text evidence="1 2">Virulence factor that is important for the establishment of infection in the host. EsxB is required for EsxA synthesis as well as secretion (By similarity). Mediates together with EsxA the release of S.aureus from the host cell. Also inhibits host cytokine production and thus modulates dendritic cell-mediated immunity (By similarity).</text>
</comment>
<comment type="subunit">
    <text evidence="3">Homodimer. When mixed with EsxA does not form heterodimers.</text>
</comment>
<comment type="subcellular location">
    <subcellularLocation>
        <location evidence="2">Secreted</location>
    </subcellularLocation>
    <text evidence="2">Secreted via the ESAT-6 secretion system (Ess) / type VII secretion system (T7SS).</text>
</comment>
<comment type="similarity">
    <text evidence="4">Belongs to the WXG100 family.</text>
</comment>
<accession>Q8NYF1</accession>
<protein>
    <recommendedName>
        <fullName evidence="2">Type VII secretion system extracellular protein B</fullName>
        <shortName evidence="2">Ess extracellular protein B</shortName>
    </recommendedName>
</protein>
<sequence length="104" mass="11492">MGGYKGIKADGGKVDQAKQLAAKTAKDIEACQKQTQQLAEYIEGSDWEGQFANKVKDVLLIMAKFQEELVQPIADHQKAIDNLSQNLAKYDTLSIKQGLDRVNP</sequence>
<reference key="1">
    <citation type="journal article" date="2002" name="Lancet">
        <title>Genome and virulence determinants of high virulence community-acquired MRSA.</title>
        <authorList>
            <person name="Baba T."/>
            <person name="Takeuchi F."/>
            <person name="Kuroda M."/>
            <person name="Yuzawa H."/>
            <person name="Aoki K."/>
            <person name="Oguchi A."/>
            <person name="Nagai Y."/>
            <person name="Iwama N."/>
            <person name="Asano K."/>
            <person name="Naimi T."/>
            <person name="Kuroda H."/>
            <person name="Cui L."/>
            <person name="Yamamoto K."/>
            <person name="Hiramatsu K."/>
        </authorList>
    </citation>
    <scope>NUCLEOTIDE SEQUENCE [LARGE SCALE GENOMIC DNA]</scope>
    <source>
        <strain>MW2</strain>
    </source>
</reference>